<comment type="function">
    <text evidence="2">Key transcriptional regulator of type I interferon (IFN)-dependent immune responses which plays a critical role in the innate immune response against DNA and RNA viruses. Regulates the transcription of type I IFN genes (IFN-alpha and IFN-beta) and IFN-stimulated genes (ISG) by binding to an interferon-stimulated response element (ISRE) in their promoters. Acts as a more potent activator of the IFN-beta (IFNB) gene than the IFN-alpha (IFNA) gene and plays a critical role in both the early and late phases of the IFNA/B gene induction. Found in an inactive form in the cytoplasm of uninfected cells and following viral infection, double-stranded RNA (dsRNA), or toll-like receptor (TLR) signaling, is phosphorylated by IKBKE and TBK1 kinases. This induces a conformational change, leading to its dimerization and nuclear localization and association with CREB binding protein (CREBBP) to form dsRNA-activated factor 1 (DRAF1), a complex which activates the transcription of the type I IFN and ISG genes. Can activate distinct gene expression programs in macrophages and can induce significant apoptosis in primary macrophages.</text>
</comment>
<comment type="activity regulation">
    <text evidence="2">In the absence of viral infection, maintained as a monomer in an autoinhibited state. Phosphorylation by TBK1 and IKBKE disrupts this autoinhibition leading to the liberation of the DNA-binding and dimerization activities and its nuclear localization where it can activate type I IFN and ISG genes. Phosphorylation and activation follow the following steps: innate adapter proteins, such as MAVS, STING1 or TICAM1, are first activated by viral RNA, cytosolic DNA and bacterial lipopolysaccharide (LPS), respectively, leading to activation of the kinases TBK1 and IKBKE. These kinases then phosphorylate the adapter proteins on their pLxIS motif, leading to recruitment of IRF3, thereby licensing IRF3 for phosphorylation by TBK1. Phosphorylated IRF3 dissociates from the adapter proteins, dimerizes, and then enters the nucleus to induce IFNs.</text>
</comment>
<comment type="subunit">
    <text evidence="2">Monomer. Homodimer; phosphorylation-induced. Interacts (when phosphorylated) with CREBBP. Interacts with MAVS (via phosphorylated pLxIS motif). Interacts with TICAM1 (via phosphorylated pLxIS motif). Interacts with STING1 (via phosphorylated pLxIS motif). Interacts with IKBKE and TBK1. Interacts with TICAM2. Interacts with RBCK1. Interacts with HERC5. Interacts with DDX3X; the interaction allows the phosphorylation and activation of IRF3 by IKBKE. Interacts with TRIM21 and ULK1, in the presence of TRIM21; this interaction leads to IRF3 degradation by autophagy. Interacts with RIOK3; RIOK3 probably mediates the interaction of TBK1 with IRF3. Interacts with ILRUN; the interaction inhibits IRF3 binding to its DNA consensus sequence. Interacts with LYAR; this interaction impairs IRF3 DNA-binding activity. Interacts with TRAF3. Interacts with ZDHHC11; ZDHHC11 recruits IRF3 to STING1 upon DNA virus infection and thereby promotes IRF3 activation (By similarity). Interacts with HSP90AA1; the interaction mediates IRF3 association with TOMM70. Interacts with BCL2; the interaction decreases upon Sendai virus infection. Interacts with BAX; the interaction is direct, increases upon virus infection and mediates the formation of the apoptosis complex TOMM70:HSP90AA1:IRF3:BAX (By similarity). Interacts with DDX56 (By similarity). Interacts with NBR1 (By similarity).</text>
</comment>
<comment type="subcellular location">
    <subcellularLocation>
        <location evidence="2">Cytoplasm</location>
    </subcellularLocation>
    <subcellularLocation>
        <location evidence="2">Nucleus</location>
    </subcellularLocation>
    <subcellularLocation>
        <location evidence="2">Mitochondrion</location>
    </subcellularLocation>
    <text evidence="2">Shuttles between cytoplasmic and nuclear compartments, with export being the prevailing effect. When activated, IRF3 interaction with CREBBP prevents its export to the cytoplasm. Recruited to mitochondria via TOMM70:HSP90AA1 upon Sendai virus infection.</text>
</comment>
<comment type="PTM">
    <text evidence="2">Constitutively phosphorylated on many Ser/Thr residues. Activated following phosphorylation by TBK1 and IKBKE. Innate adapter proteins, such as MAVS, STING1 or TICAM1, are first activated by viral RNA, cytosolic DNA, and bacterial lipopolysaccharide (LPS), respectively, leading to activation of the kinases TBK1 and IKBKE. These kinases then phosphorylate the adapter proteins on the pLxIS motif, leading to recruitment of IRF3, thereby licensing IRF3 for phosphorylation by TBK1. Phosphorylation at Ser-382 is followed by pyrophosphorylation at the same residue, promoting phosphorylation at Ser-392. Phosphorylated IRF3 dissociates from the adapter proteins, dimerizes, and then enters the nucleus to induce IFNs.</text>
</comment>
<comment type="PTM">
    <text evidence="2">Pyrophosphorylated by UAP1 following phosphorylation at Ser-382 by TBK1. Pyrophosphorylation promotes subsequent phosphorylation at Ser-392, leading to homodimerization of IRF3.</text>
</comment>
<comment type="PTM">
    <text evidence="1">Acetylation at Lys-362 by KAT8 inhibits recruimtent to promoters and transcription factor activity. Acetylation by KAT8 is promoted by phosphorylation at Ser-392.</text>
</comment>
<comment type="PTM">
    <text evidence="2">Ubiquitinated; ubiquitination involves RBCK1 leading to proteasomal degradation. Polyubiquitinated; ubiquitination involves TRIM21 leading to proteasomal degradation. Ubiquitinated by UBE3C, leading to its degradation. Deubiquitinated by USP5 on both 'Lys-48'-linked unanchored and 'Lys-63'-linked anchored polyubiquitin, leading to inhibition of anti-RNA viral innate immunity.</text>
</comment>
<comment type="PTM">
    <text evidence="2">ISGylated by HERC5 resulting in sustained IRF3 activation and in the inhibition of IRF3 ubiquitination by disrupting PIN1 binding. The phosphorylation state of IRF3 does not alter ISGylation.</text>
</comment>
<comment type="PTM">
    <text evidence="2">Proteolytically cleaved by apoptotic caspases during apoptosis, leading to its inactivation. Cleavage by CASP3 during virus-induced apoptosis inactivates it, preventing cytokine overproduction.</text>
</comment>
<comment type="similarity">
    <text evidence="3">Belongs to the IRF family.</text>
</comment>
<accession>Q4JF28</accession>
<accession>A8W7A8</accession>
<accession>Q45VM9</accession>
<keyword id="KW-0007">Acetylation</keyword>
<keyword id="KW-0010">Activator</keyword>
<keyword id="KW-0051">Antiviral defense</keyword>
<keyword id="KW-0963">Cytoplasm</keyword>
<keyword id="KW-1015">Disulfide bond</keyword>
<keyword id="KW-0238">DNA-binding</keyword>
<keyword id="KW-0391">Immunity</keyword>
<keyword id="KW-0399">Innate immunity</keyword>
<keyword id="KW-1017">Isopeptide bond</keyword>
<keyword id="KW-0496">Mitochondrion</keyword>
<keyword id="KW-0539">Nucleus</keyword>
<keyword id="KW-0597">Phosphoprotein</keyword>
<keyword id="KW-1185">Reference proteome</keyword>
<keyword id="KW-0804">Transcription</keyword>
<keyword id="KW-0805">Transcription regulation</keyword>
<keyword id="KW-0832">Ubl conjugation</keyword>
<evidence type="ECO:0000250" key="1">
    <source>
        <dbReference type="UniProtKB" id="P70671"/>
    </source>
</evidence>
<evidence type="ECO:0000250" key="2">
    <source>
        <dbReference type="UniProtKB" id="Q14653"/>
    </source>
</evidence>
<evidence type="ECO:0000255" key="3">
    <source>
        <dbReference type="PROSITE-ProRule" id="PRU00840"/>
    </source>
</evidence>
<evidence type="ECO:0000256" key="4">
    <source>
        <dbReference type="SAM" id="MobiDB-lite"/>
    </source>
</evidence>
<evidence type="ECO:0000305" key="5"/>
<dbReference type="EMBL" id="AJ879589">
    <property type="protein sequence ID" value="CAI53672.1"/>
    <property type="molecule type" value="mRNA"/>
</dbReference>
<dbReference type="EMBL" id="DQ103889">
    <property type="protein sequence ID" value="AAZ38325.1"/>
    <property type="molecule type" value="mRNA"/>
</dbReference>
<dbReference type="EMBL" id="EU194377">
    <property type="protein sequence ID" value="ABW74073.1"/>
    <property type="molecule type" value="mRNA"/>
</dbReference>
<dbReference type="EMBL" id="BC102119">
    <property type="protein sequence ID" value="AAI02120.1"/>
    <property type="molecule type" value="mRNA"/>
</dbReference>
<dbReference type="RefSeq" id="NP_001025016.1">
    <property type="nucleotide sequence ID" value="NM_001029845.3"/>
</dbReference>
<dbReference type="SMR" id="Q4JF28"/>
<dbReference type="FunCoup" id="Q4JF28">
    <property type="interactions" value="1556"/>
</dbReference>
<dbReference type="IntAct" id="Q4JF28">
    <property type="interactions" value="1"/>
</dbReference>
<dbReference type="STRING" id="9913.ENSBTAP00000031815"/>
<dbReference type="PaxDb" id="9913-ENSBTAP00000031815"/>
<dbReference type="Ensembl" id="ENSBTAT00000031869.3">
    <property type="protein sequence ID" value="ENSBTAP00000031815.2"/>
    <property type="gene ID" value="ENSBTAG00000006633.5"/>
</dbReference>
<dbReference type="GeneID" id="516979"/>
<dbReference type="KEGG" id="bta:516979"/>
<dbReference type="CTD" id="3661"/>
<dbReference type="VEuPathDB" id="HostDB:ENSBTAG00000006633"/>
<dbReference type="VGNC" id="VGNC:30274">
    <property type="gene designation" value="IRF3"/>
</dbReference>
<dbReference type="eggNOG" id="ENOG502QTRR">
    <property type="taxonomic scope" value="Eukaryota"/>
</dbReference>
<dbReference type="GeneTree" id="ENSGT00940000160569"/>
<dbReference type="HOGENOM" id="CLU_031544_2_0_1"/>
<dbReference type="InParanoid" id="Q4JF28"/>
<dbReference type="OMA" id="DRGVMGY"/>
<dbReference type="OrthoDB" id="8691508at2759"/>
<dbReference type="TreeFam" id="TF328512"/>
<dbReference type="Reactome" id="R-BTA-1169408">
    <property type="pathway name" value="ISG15 antiviral mechanism"/>
</dbReference>
<dbReference type="Reactome" id="R-BTA-1606341">
    <property type="pathway name" value="IRF3 mediated activation of type 1 IFN"/>
</dbReference>
<dbReference type="Reactome" id="R-BTA-168928">
    <property type="pathway name" value="DDX58/IFIH1-mediated induction of interferon-alpha/beta"/>
</dbReference>
<dbReference type="Reactome" id="R-BTA-3134973">
    <property type="pathway name" value="LRR FLII-interacting protein 1 (LRRFIP1) activates type I IFN production"/>
</dbReference>
<dbReference type="Reactome" id="R-BTA-3270619">
    <property type="pathway name" value="IRF3-mediated induction of type I IFN"/>
</dbReference>
<dbReference type="Reactome" id="R-BTA-9013973">
    <property type="pathway name" value="TICAM1-dependent activation of IRF3/IRF7"/>
</dbReference>
<dbReference type="Reactome" id="R-BTA-918233">
    <property type="pathway name" value="TRAF3-dependent IRF activation pathway"/>
</dbReference>
<dbReference type="Reactome" id="R-BTA-933541">
    <property type="pathway name" value="TRAF6 mediated IRF7 activation"/>
</dbReference>
<dbReference type="Reactome" id="R-BTA-936440">
    <property type="pathway name" value="Negative regulators of DDX58/IFIH1 signaling"/>
</dbReference>
<dbReference type="Reactome" id="R-BTA-936964">
    <property type="pathway name" value="Activation of IRF3, IRF7 mediated by TBK1, IKKEpsilon (IKBKE)"/>
</dbReference>
<dbReference type="Proteomes" id="UP000009136">
    <property type="component" value="Chromosome 18"/>
</dbReference>
<dbReference type="Bgee" id="ENSBTAG00000006633">
    <property type="expression patterns" value="Expressed in mesenteric lymph node and 104 other cell types or tissues"/>
</dbReference>
<dbReference type="GO" id="GO:0005739">
    <property type="term" value="C:mitochondrion"/>
    <property type="evidence" value="ECO:0000250"/>
    <property type="project" value="UniProtKB"/>
</dbReference>
<dbReference type="GO" id="GO:0005634">
    <property type="term" value="C:nucleus"/>
    <property type="evidence" value="ECO:0000318"/>
    <property type="project" value="GO_Central"/>
</dbReference>
<dbReference type="GO" id="GO:0000981">
    <property type="term" value="F:DNA-binding transcription factor activity, RNA polymerase II-specific"/>
    <property type="evidence" value="ECO:0000318"/>
    <property type="project" value="GO_Central"/>
</dbReference>
<dbReference type="GO" id="GO:0000978">
    <property type="term" value="F:RNA polymerase II cis-regulatory region sequence-specific DNA binding"/>
    <property type="evidence" value="ECO:0000318"/>
    <property type="project" value="GO_Central"/>
</dbReference>
<dbReference type="GO" id="GO:0098586">
    <property type="term" value="P:cellular response to virus"/>
    <property type="evidence" value="ECO:0000250"/>
    <property type="project" value="UniProtKB"/>
</dbReference>
<dbReference type="GO" id="GO:0051607">
    <property type="term" value="P:defense response to virus"/>
    <property type="evidence" value="ECO:0000250"/>
    <property type="project" value="UniProtKB"/>
</dbReference>
<dbReference type="GO" id="GO:0002376">
    <property type="term" value="P:immune system process"/>
    <property type="evidence" value="ECO:0000318"/>
    <property type="project" value="GO_Central"/>
</dbReference>
<dbReference type="GO" id="GO:0045087">
    <property type="term" value="P:innate immune response"/>
    <property type="evidence" value="ECO:0007669"/>
    <property type="project" value="UniProtKB-KW"/>
</dbReference>
<dbReference type="GO" id="GO:0045893">
    <property type="term" value="P:positive regulation of DNA-templated transcription"/>
    <property type="evidence" value="ECO:0007669"/>
    <property type="project" value="UniProtKB-ARBA"/>
</dbReference>
<dbReference type="GO" id="GO:0032727">
    <property type="term" value="P:positive regulation of interferon-alpha production"/>
    <property type="evidence" value="ECO:0000250"/>
    <property type="project" value="UniProtKB"/>
</dbReference>
<dbReference type="GO" id="GO:0032728">
    <property type="term" value="P:positive regulation of interferon-beta production"/>
    <property type="evidence" value="ECO:0000250"/>
    <property type="project" value="UniProtKB"/>
</dbReference>
<dbReference type="GO" id="GO:0032481">
    <property type="term" value="P:positive regulation of type I interferon production"/>
    <property type="evidence" value="ECO:0000250"/>
    <property type="project" value="UniProtKB"/>
</dbReference>
<dbReference type="GO" id="GO:0042981">
    <property type="term" value="P:regulation of apoptotic process"/>
    <property type="evidence" value="ECO:0000250"/>
    <property type="project" value="UniProtKB"/>
</dbReference>
<dbReference type="GO" id="GO:0006357">
    <property type="term" value="P:regulation of transcription by RNA polymerase II"/>
    <property type="evidence" value="ECO:0000318"/>
    <property type="project" value="GO_Central"/>
</dbReference>
<dbReference type="GO" id="GO:0035666">
    <property type="term" value="P:TRIF-dependent toll-like receptor signaling pathway"/>
    <property type="evidence" value="ECO:0000250"/>
    <property type="project" value="UniProtKB"/>
</dbReference>
<dbReference type="CDD" id="cd00103">
    <property type="entry name" value="IRF"/>
    <property type="match status" value="1"/>
</dbReference>
<dbReference type="FunFam" id="1.10.10.10:FF:000263">
    <property type="entry name" value="Interferon regulatory factor 3"/>
    <property type="match status" value="1"/>
</dbReference>
<dbReference type="FunFam" id="2.60.200.10:FF:000008">
    <property type="entry name" value="Interferon regulatory factor 3"/>
    <property type="match status" value="1"/>
</dbReference>
<dbReference type="Gene3D" id="2.60.200.10">
    <property type="match status" value="1"/>
</dbReference>
<dbReference type="Gene3D" id="1.10.10.10">
    <property type="entry name" value="Winged helix-like DNA-binding domain superfamily/Winged helix DNA-binding domain"/>
    <property type="match status" value="1"/>
</dbReference>
<dbReference type="InterPro" id="IPR001346">
    <property type="entry name" value="Interferon_reg_fact_DNA-bd_dom"/>
</dbReference>
<dbReference type="InterPro" id="IPR019471">
    <property type="entry name" value="Interferon_reg_factor-3"/>
</dbReference>
<dbReference type="InterPro" id="IPR017855">
    <property type="entry name" value="SMAD-like_dom_sf"/>
</dbReference>
<dbReference type="InterPro" id="IPR008984">
    <property type="entry name" value="SMAD_FHA_dom_sf"/>
</dbReference>
<dbReference type="InterPro" id="IPR036388">
    <property type="entry name" value="WH-like_DNA-bd_sf"/>
</dbReference>
<dbReference type="InterPro" id="IPR036390">
    <property type="entry name" value="WH_DNA-bd_sf"/>
</dbReference>
<dbReference type="PANTHER" id="PTHR11949">
    <property type="entry name" value="INTERFERON REGULATORY FACTOR"/>
    <property type="match status" value="1"/>
</dbReference>
<dbReference type="PANTHER" id="PTHR11949:SF1">
    <property type="entry name" value="INTERFERON REGULATORY FACTOR 3"/>
    <property type="match status" value="1"/>
</dbReference>
<dbReference type="Pfam" id="PF00605">
    <property type="entry name" value="IRF"/>
    <property type="match status" value="1"/>
</dbReference>
<dbReference type="Pfam" id="PF10401">
    <property type="entry name" value="IRF-3"/>
    <property type="match status" value="1"/>
</dbReference>
<dbReference type="PRINTS" id="PR00267">
    <property type="entry name" value="INTFRNREGFCT"/>
</dbReference>
<dbReference type="SMART" id="SM00348">
    <property type="entry name" value="IRF"/>
    <property type="match status" value="1"/>
</dbReference>
<dbReference type="SMART" id="SM01243">
    <property type="entry name" value="IRF-3"/>
    <property type="match status" value="1"/>
</dbReference>
<dbReference type="SUPFAM" id="SSF49879">
    <property type="entry name" value="SMAD/FHA domain"/>
    <property type="match status" value="1"/>
</dbReference>
<dbReference type="SUPFAM" id="SSF46785">
    <property type="entry name" value="Winged helix' DNA-binding domain"/>
    <property type="match status" value="1"/>
</dbReference>
<dbReference type="PROSITE" id="PS51507">
    <property type="entry name" value="IRF_2"/>
    <property type="match status" value="1"/>
</dbReference>
<protein>
    <recommendedName>
        <fullName>Interferon regulatory factor 3</fullName>
        <shortName>IRF-3</shortName>
    </recommendedName>
</protein>
<organism>
    <name type="scientific">Bos taurus</name>
    <name type="common">Bovine</name>
    <dbReference type="NCBI Taxonomy" id="9913"/>
    <lineage>
        <taxon>Eukaryota</taxon>
        <taxon>Metazoa</taxon>
        <taxon>Chordata</taxon>
        <taxon>Craniata</taxon>
        <taxon>Vertebrata</taxon>
        <taxon>Euteleostomi</taxon>
        <taxon>Mammalia</taxon>
        <taxon>Eutheria</taxon>
        <taxon>Laurasiatheria</taxon>
        <taxon>Artiodactyla</taxon>
        <taxon>Ruminantia</taxon>
        <taxon>Pecora</taxon>
        <taxon>Bovidae</taxon>
        <taxon>Bovinae</taxon>
        <taxon>Bos</taxon>
    </lineage>
</organism>
<proteinExistence type="evidence at transcript level"/>
<feature type="chain" id="PRO_0000223675" description="Interferon regulatory factor 3">
    <location>
        <begin position="1"/>
        <end position="417"/>
    </location>
</feature>
<feature type="DNA-binding region" description="IRF tryptophan pentad repeat" evidence="3">
    <location>
        <begin position="5"/>
        <end position="111"/>
    </location>
</feature>
<feature type="region of interest" description="Disordered" evidence="4">
    <location>
        <begin position="111"/>
        <end position="134"/>
    </location>
</feature>
<feature type="region of interest" description="Mediates interaction with ZDHHC11" evidence="2">
    <location>
        <begin position="140"/>
        <end position="417"/>
    </location>
</feature>
<feature type="region of interest" description="Disordered" evidence="4">
    <location>
        <begin position="147"/>
        <end position="170"/>
    </location>
</feature>
<feature type="region of interest" description="Interaction with HERC5" evidence="2">
    <location>
        <begin position="196"/>
        <end position="356"/>
    </location>
</feature>
<feature type="site" description="Cleavage; by CASP3" evidence="2">
    <location>
        <begin position="121"/>
        <end position="122"/>
    </location>
</feature>
<feature type="modified residue" description="Phosphothreonine" evidence="2">
    <location>
        <position position="3"/>
    </location>
</feature>
<feature type="modified residue" description="Phosphoserine" evidence="2">
    <location>
        <position position="14"/>
    </location>
</feature>
<feature type="modified residue" description="Phosphothreonine" evidence="2">
    <location>
        <position position="75"/>
    </location>
</feature>
<feature type="modified residue" description="Phosphoserine" evidence="2">
    <location>
        <position position="97"/>
    </location>
</feature>
<feature type="modified residue" description="Phosphoserine" evidence="1">
    <location>
        <position position="123"/>
    </location>
</feature>
<feature type="modified residue" description="Phosphoserine" evidence="2">
    <location>
        <position position="184"/>
    </location>
</feature>
<feature type="modified residue" description="Phosphothreonine" evidence="2">
    <location>
        <position position="249"/>
    </location>
</feature>
<feature type="modified residue" description="N6-acetyllysine" evidence="1">
    <location>
        <position position="362"/>
    </location>
</feature>
<feature type="modified residue" description="Phosphoserine" evidence="2">
    <location>
        <position position="381"/>
    </location>
</feature>
<feature type="modified residue" description="Diphosphoserine" evidence="2">
    <location>
        <position position="382"/>
    </location>
</feature>
<feature type="modified residue" description="Phosphoserine; by TBK1" evidence="2">
    <location>
        <position position="382"/>
    </location>
</feature>
<feature type="modified residue" description="Phosphoserine; by IKKE" evidence="2">
    <location>
        <position position="392"/>
    </location>
</feature>
<feature type="modified residue" description="Phosphoserine" evidence="2">
    <location>
        <position position="394"/>
    </location>
</feature>
<feature type="modified residue" description="Phosphothreonine" evidence="2">
    <location>
        <position position="400"/>
    </location>
</feature>
<feature type="disulfide bond" evidence="2">
    <location>
        <begin position="263"/>
        <end position="285"/>
    </location>
</feature>
<feature type="cross-link" description="Glycyl lysine isopeptide (Lys-Gly) (interchain with G-Cter in ISG15)" evidence="2">
    <location>
        <position position="189"/>
    </location>
</feature>
<feature type="cross-link" description="Glycyl lysine isopeptide (Lys-Gly) (interchain with G-Cter in ISG15)" evidence="2">
    <location>
        <position position="356"/>
    </location>
</feature>
<feature type="cross-link" description="Glycyl lysine isopeptide (Lys-Gly) (interchain with G-Cter in ISG15)" evidence="2">
    <location>
        <position position="362"/>
    </location>
</feature>
<feature type="sequence conflict" description="In Ref. 2; AAZ38325." evidence="5" ref="2">
    <original>AWAV</original>
    <variation>VRAE</variation>
    <location>
        <begin position="56"/>
        <end position="59"/>
    </location>
</feature>
<feature type="sequence conflict" description="In Ref. 2; AAZ38325." evidence="5" ref="2">
    <original>SQ</original>
    <variation>PH</variation>
    <location>
        <begin position="100"/>
        <end position="101"/>
    </location>
</feature>
<feature type="sequence conflict" description="In Ref. 2; AAZ38325." evidence="5" ref="2">
    <original>RDI</original>
    <variation>GDF</variation>
    <location>
        <begin position="115"/>
        <end position="117"/>
    </location>
</feature>
<feature type="sequence conflict" description="In Ref. 2; AAZ38325." evidence="5" ref="2">
    <original>N</original>
    <variation>S</variation>
    <location>
        <position position="130"/>
    </location>
</feature>
<sequence>MGTQKPRILPWLISQLDRGELEGVAWLGESRTRFRIPWKHGLRQDAQQEDFGIFQAWAVASGAYTPGKDKPDLPTWKRNFRSALNRKEVLRLAEDHSKDSQDPHKIYEFVNSGVRDIPEPDTSQDNGRHNTSDTQEDTLEKLLSDMDLSPGGPSNLTMASEKPPQFLQSPDSDIPALCPNSGLSENPLKQLLANEEDWEFEVTAFYRGCQVFQQTVFCPGGLRLVGSEAGDRMLPGQPIRLPDPATSLTDKSVTDYVQRVLSCLGGGLALWRAGQWLCAQRLGHCHVYWAIGEELLPSCGHKPDGEVPKDREGGVFNLGPFITDLITFIEGSRRSPLYTLWFCVGQSWPQDQPWIKRLVMVKVVPMCLRVLVDIARQGGASSLENTVDLHISNSDPLSLTPDQYMACLQDLAEDMDF</sequence>
<gene>
    <name type="primary">IRF3</name>
</gene>
<reference key="1">
    <citation type="submission" date="2005-02" db="EMBL/GenBank/DDBJ databases">
        <title>Dissection of MyD88 dependent and independent TLR-mediated signal transduction in mammary epithelial cells of the cow.</title>
        <authorList>
            <person name="Yang W."/>
            <person name="Seyfert H.M."/>
        </authorList>
    </citation>
    <scope>NUCLEOTIDE SEQUENCE [MRNA]</scope>
    <source>
        <tissue>Mammary gland</tissue>
    </source>
</reference>
<reference key="2">
    <citation type="submission" date="2005-06" db="EMBL/GenBank/DDBJ databases">
        <title>Stimulation of the MyD88-independent pathway in bovine antigen presenting cells.</title>
        <authorList>
            <person name="Werling D."/>
        </authorList>
    </citation>
    <scope>NUCLEOTIDE SEQUENCE [MRNA]</scope>
</reference>
<reference key="3">
    <citation type="submission" date="2007-10" db="EMBL/GenBank/DDBJ databases">
        <authorList>
            <person name="Goodbourn S."/>
            <person name="Moganeradj K."/>
            <person name="McCauley J."/>
        </authorList>
    </citation>
    <scope>NUCLEOTIDE SEQUENCE [MRNA]</scope>
</reference>
<reference key="4">
    <citation type="submission" date="2005-08" db="EMBL/GenBank/DDBJ databases">
        <authorList>
            <consortium name="NIH - Mammalian Gene Collection (MGC) project"/>
        </authorList>
    </citation>
    <scope>NUCLEOTIDE SEQUENCE [LARGE SCALE MRNA]</scope>
    <source>
        <strain>Crossbred X Angus</strain>
        <tissue>Ileum</tissue>
    </source>
</reference>
<name>IRF3_BOVIN</name>